<dbReference type="EMBL" id="AB062777">
    <property type="protein sequence ID" value="BAB60688.1"/>
    <property type="molecule type" value="Genomic_DNA"/>
</dbReference>
<dbReference type="EMBL" id="CU329670">
    <property type="protein sequence ID" value="CAB16228.1"/>
    <property type="molecule type" value="Genomic_DNA"/>
</dbReference>
<dbReference type="PIR" id="T37849">
    <property type="entry name" value="T37849"/>
</dbReference>
<dbReference type="RefSeq" id="NP_594264.1">
    <property type="nucleotide sequence ID" value="NM_001019687.2"/>
</dbReference>
<dbReference type="PDB" id="6TZN">
    <property type="method" value="X-ray"/>
    <property type="resolution" value="1.35 A"/>
    <property type="chains" value="A=282-402"/>
</dbReference>
<dbReference type="PDB" id="6U7V">
    <property type="method" value="X-ray"/>
    <property type="resolution" value="1.42 A"/>
    <property type="chains" value="A=273-402"/>
</dbReference>
<dbReference type="PDBsum" id="6TZN"/>
<dbReference type="PDBsum" id="6U7V"/>
<dbReference type="SMR" id="O13795"/>
<dbReference type="BioGRID" id="278669">
    <property type="interactions" value="19"/>
</dbReference>
<dbReference type="IntAct" id="O13795">
    <property type="interactions" value="1"/>
</dbReference>
<dbReference type="STRING" id="284812.O13795"/>
<dbReference type="iPTMnet" id="O13795"/>
<dbReference type="PaxDb" id="4896-SPAC17G6.17.1"/>
<dbReference type="EnsemblFungi" id="SPAC17G6.17.1">
    <property type="protein sequence ID" value="SPAC17G6.17.1:pep"/>
    <property type="gene ID" value="SPAC17G6.17"/>
</dbReference>
<dbReference type="GeneID" id="2542194"/>
<dbReference type="KEGG" id="spo:2542194"/>
<dbReference type="PomBase" id="SPAC17G6.17">
    <property type="gene designation" value="pof8"/>
</dbReference>
<dbReference type="VEuPathDB" id="FungiDB:SPAC17G6.17"/>
<dbReference type="HOGENOM" id="CLU_689191_0_0_1"/>
<dbReference type="InParanoid" id="O13795"/>
<dbReference type="OMA" id="CEPMYID"/>
<dbReference type="PRO" id="PR:O13795"/>
<dbReference type="Proteomes" id="UP000002485">
    <property type="component" value="Chromosome I"/>
</dbReference>
<dbReference type="GO" id="GO:0140445">
    <property type="term" value="C:chromosome, telomeric repeat region"/>
    <property type="evidence" value="ECO:0000314"/>
    <property type="project" value="PomBase"/>
</dbReference>
<dbReference type="GO" id="GO:0005829">
    <property type="term" value="C:cytosol"/>
    <property type="evidence" value="ECO:0007005"/>
    <property type="project" value="PomBase"/>
</dbReference>
<dbReference type="GO" id="GO:0005634">
    <property type="term" value="C:nucleus"/>
    <property type="evidence" value="ECO:0007005"/>
    <property type="project" value="PomBase"/>
</dbReference>
<dbReference type="GO" id="GO:0005732">
    <property type="term" value="C:sno(s)RNA-containing ribonucleoprotein complex"/>
    <property type="evidence" value="ECO:0000269"/>
    <property type="project" value="PomBase"/>
</dbReference>
<dbReference type="GO" id="GO:0005697">
    <property type="term" value="C:telomerase holoenzyme complex"/>
    <property type="evidence" value="ECO:0000315"/>
    <property type="project" value="UniProtKB"/>
</dbReference>
<dbReference type="GO" id="GO:0003682">
    <property type="term" value="F:chromatin binding"/>
    <property type="evidence" value="ECO:0000353"/>
    <property type="project" value="PomBase"/>
</dbReference>
<dbReference type="GO" id="GO:0070034">
    <property type="term" value="F:telomerase RNA binding"/>
    <property type="evidence" value="ECO:0000353"/>
    <property type="project" value="PomBase"/>
</dbReference>
<dbReference type="GO" id="GO:0071027">
    <property type="term" value="P:nuclear RNA surveillance"/>
    <property type="evidence" value="ECO:0000315"/>
    <property type="project" value="PomBase"/>
</dbReference>
<dbReference type="GO" id="GO:0016180">
    <property type="term" value="P:snRNA processing"/>
    <property type="evidence" value="ECO:0000315"/>
    <property type="project" value="PomBase"/>
</dbReference>
<dbReference type="GO" id="GO:1904868">
    <property type="term" value="P:telomerase catalytic core complex assembly"/>
    <property type="evidence" value="ECO:0000315"/>
    <property type="project" value="UniProtKB"/>
</dbReference>
<dbReference type="GO" id="GO:0090669">
    <property type="term" value="P:telomerase RNA stabilization"/>
    <property type="evidence" value="ECO:0000315"/>
    <property type="project" value="PomBase"/>
</dbReference>
<dbReference type="GO" id="GO:0007004">
    <property type="term" value="P:telomere maintenance via telomerase"/>
    <property type="evidence" value="ECO:0000315"/>
    <property type="project" value="UniProtKB"/>
</dbReference>
<dbReference type="CDD" id="cd21611">
    <property type="entry name" value="RRM_SpPof8_like"/>
    <property type="match status" value="1"/>
</dbReference>
<dbReference type="Gene3D" id="3.30.70.330">
    <property type="match status" value="1"/>
</dbReference>
<dbReference type="InterPro" id="IPR014886">
    <property type="entry name" value="La_xRRM"/>
</dbReference>
<dbReference type="InterPro" id="IPR045537">
    <property type="entry name" value="Lar7_xRRM"/>
</dbReference>
<dbReference type="InterPro" id="IPR012677">
    <property type="entry name" value="Nucleotide-bd_a/b_plait_sf"/>
</dbReference>
<dbReference type="Pfam" id="PF19977">
    <property type="entry name" value="xRRM"/>
    <property type="match status" value="1"/>
</dbReference>
<dbReference type="PROSITE" id="PS51939">
    <property type="entry name" value="XRRM"/>
    <property type="match status" value="1"/>
</dbReference>
<feature type="chain" id="PRO_0000119975" description="La-related protein 7 homolog">
    <location>
        <begin position="1"/>
        <end position="402"/>
    </location>
</feature>
<feature type="domain" description="xRRM" evidence="1">
    <location>
        <begin position="288"/>
        <end position="402"/>
    </location>
</feature>
<feature type="region of interest" description="HTH La-type RNA-binding-like region" evidence="7">
    <location>
        <begin position="64"/>
        <end position="138"/>
    </location>
</feature>
<feature type="region of interest" description="RRM-like region" evidence="7">
    <location>
        <begin position="148"/>
        <end position="230"/>
    </location>
</feature>
<feature type="region of interest" description="xRRM-like region" evidence="7">
    <location>
        <begin position="288"/>
        <end position="400"/>
    </location>
</feature>
<feature type="mutagenesis site" description="Strongly reduced binding to ter1 RNA, leading to short telomeres." evidence="4">
    <original>W</original>
    <variation>A</variation>
    <location>
        <position position="103"/>
    </location>
</feature>
<feature type="mutagenesis site" description="Strongly reduced binding to ter1 RNA, leading to short telomeres." evidence="4">
    <original>FV</original>
    <variation>EE</variation>
    <location>
        <begin position="197"/>
        <end position="198"/>
    </location>
</feature>
<feature type="mutagenesis site" description="Abolishes binding to ter1 RNA without affecting localization to telomeres." evidence="5">
    <original>Y</original>
    <variation>A</variation>
    <location>
        <position position="330"/>
    </location>
</feature>
<feature type="mutagenesis site" description="Strongly reduced binding to ter1 RNA, leading to short telomeres." evidence="4">
    <original>II</original>
    <variation>EE</variation>
    <location>
        <begin position="341"/>
        <end position="342"/>
    </location>
</feature>
<feature type="mutagenesis site" description="Abolishes binding to ter1 RNA without affecting localization to telomeres." evidence="5">
    <original>R</original>
    <variation>A</variation>
    <location>
        <position position="343"/>
    </location>
</feature>
<feature type="strand" evidence="12">
    <location>
        <begin position="294"/>
        <end position="299"/>
    </location>
</feature>
<feature type="helix" evidence="12">
    <location>
        <begin position="306"/>
        <end position="320"/>
    </location>
</feature>
<feature type="strand" evidence="12">
    <location>
        <begin position="322"/>
        <end position="324"/>
    </location>
</feature>
<feature type="strand" evidence="12">
    <location>
        <begin position="328"/>
        <end position="332"/>
    </location>
</feature>
<feature type="strand" evidence="12">
    <location>
        <begin position="338"/>
        <end position="346"/>
    </location>
</feature>
<feature type="helix" evidence="12">
    <location>
        <begin position="347"/>
        <end position="359"/>
    </location>
</feature>
<feature type="strand" evidence="12">
    <location>
        <begin position="384"/>
        <end position="387"/>
    </location>
</feature>
<feature type="helix" evidence="12">
    <location>
        <begin position="390"/>
        <end position="400"/>
    </location>
</feature>
<reference key="1">
    <citation type="submission" date="2001-06" db="EMBL/GenBank/DDBJ databases">
        <title>Systematic genome-wide analysis of F-box protein-encoding genes in fission yeast.</title>
        <authorList>
            <person name="Harrison C.L."/>
            <person name="Toda T."/>
        </authorList>
    </citation>
    <scope>NUCLEOTIDE SEQUENCE [GENOMIC DNA]</scope>
</reference>
<reference key="2">
    <citation type="journal article" date="2002" name="Nature">
        <title>The genome sequence of Schizosaccharomyces pombe.</title>
        <authorList>
            <person name="Wood V."/>
            <person name="Gwilliam R."/>
            <person name="Rajandream M.A."/>
            <person name="Lyne M.H."/>
            <person name="Lyne R."/>
            <person name="Stewart A."/>
            <person name="Sgouros J.G."/>
            <person name="Peat N."/>
            <person name="Hayles J."/>
            <person name="Baker S.G."/>
            <person name="Basham D."/>
            <person name="Bowman S."/>
            <person name="Brooks K."/>
            <person name="Brown D."/>
            <person name="Brown S."/>
            <person name="Chillingworth T."/>
            <person name="Churcher C.M."/>
            <person name="Collins M."/>
            <person name="Connor R."/>
            <person name="Cronin A."/>
            <person name="Davis P."/>
            <person name="Feltwell T."/>
            <person name="Fraser A."/>
            <person name="Gentles S."/>
            <person name="Goble A."/>
            <person name="Hamlin N."/>
            <person name="Harris D.E."/>
            <person name="Hidalgo J."/>
            <person name="Hodgson G."/>
            <person name="Holroyd S."/>
            <person name="Hornsby T."/>
            <person name="Howarth S."/>
            <person name="Huckle E.J."/>
            <person name="Hunt S."/>
            <person name="Jagels K."/>
            <person name="James K.D."/>
            <person name="Jones L."/>
            <person name="Jones M."/>
            <person name="Leather S."/>
            <person name="McDonald S."/>
            <person name="McLean J."/>
            <person name="Mooney P."/>
            <person name="Moule S."/>
            <person name="Mungall K.L."/>
            <person name="Murphy L.D."/>
            <person name="Niblett D."/>
            <person name="Odell C."/>
            <person name="Oliver K."/>
            <person name="O'Neil S."/>
            <person name="Pearson D."/>
            <person name="Quail M.A."/>
            <person name="Rabbinowitsch E."/>
            <person name="Rutherford K.M."/>
            <person name="Rutter S."/>
            <person name="Saunders D."/>
            <person name="Seeger K."/>
            <person name="Sharp S."/>
            <person name="Skelton J."/>
            <person name="Simmonds M.N."/>
            <person name="Squares R."/>
            <person name="Squares S."/>
            <person name="Stevens K."/>
            <person name="Taylor K."/>
            <person name="Taylor R.G."/>
            <person name="Tivey A."/>
            <person name="Walsh S.V."/>
            <person name="Warren T."/>
            <person name="Whitehead S."/>
            <person name="Woodward J.R."/>
            <person name="Volckaert G."/>
            <person name="Aert R."/>
            <person name="Robben J."/>
            <person name="Grymonprez B."/>
            <person name="Weltjens I."/>
            <person name="Vanstreels E."/>
            <person name="Rieger M."/>
            <person name="Schaefer M."/>
            <person name="Mueller-Auer S."/>
            <person name="Gabel C."/>
            <person name="Fuchs M."/>
            <person name="Duesterhoeft A."/>
            <person name="Fritzc C."/>
            <person name="Holzer E."/>
            <person name="Moestl D."/>
            <person name="Hilbert H."/>
            <person name="Borzym K."/>
            <person name="Langer I."/>
            <person name="Beck A."/>
            <person name="Lehrach H."/>
            <person name="Reinhardt R."/>
            <person name="Pohl T.M."/>
            <person name="Eger P."/>
            <person name="Zimmermann W."/>
            <person name="Wedler H."/>
            <person name="Wambutt R."/>
            <person name="Purnelle B."/>
            <person name="Goffeau A."/>
            <person name="Cadieu E."/>
            <person name="Dreano S."/>
            <person name="Gloux S."/>
            <person name="Lelaure V."/>
            <person name="Mottier S."/>
            <person name="Galibert F."/>
            <person name="Aves S.J."/>
            <person name="Xiang Z."/>
            <person name="Hunt C."/>
            <person name="Moore K."/>
            <person name="Hurst S.M."/>
            <person name="Lucas M."/>
            <person name="Rochet M."/>
            <person name="Gaillardin C."/>
            <person name="Tallada V.A."/>
            <person name="Garzon A."/>
            <person name="Thode G."/>
            <person name="Daga R.R."/>
            <person name="Cruzado L."/>
            <person name="Jimenez J."/>
            <person name="Sanchez M."/>
            <person name="del Rey F."/>
            <person name="Benito J."/>
            <person name="Dominguez A."/>
            <person name="Revuelta J.L."/>
            <person name="Moreno S."/>
            <person name="Armstrong J."/>
            <person name="Forsburg S.L."/>
            <person name="Cerutti L."/>
            <person name="Lowe T."/>
            <person name="McCombie W.R."/>
            <person name="Paulsen I."/>
            <person name="Potashkin J."/>
            <person name="Shpakovski G.V."/>
            <person name="Ussery D."/>
            <person name="Barrell B.G."/>
            <person name="Nurse P."/>
        </authorList>
    </citation>
    <scope>NUCLEOTIDE SEQUENCE [LARGE SCALE GENOMIC DNA]</scope>
    <source>
        <strain>972 / ATCC 24843</strain>
    </source>
</reference>
<reference key="3">
    <citation type="journal article" date="2004" name="Genes Cells">
        <title>Molecular interactions of fission yeast Skp1 and its role in the DNA damage checkpoint.</title>
        <authorList>
            <person name="Lehmann A."/>
            <person name="Katayama S."/>
            <person name="Harrison C."/>
            <person name="Dhut S."/>
            <person name="Kitamura K."/>
            <person name="McDonald N."/>
            <person name="Toda T."/>
        </authorList>
    </citation>
    <scope>INTERACTION WITH SKP1</scope>
</reference>
<reference key="4">
    <citation type="journal article" date="2006" name="Nat. Biotechnol.">
        <title>ORFeome cloning and global analysis of protein localization in the fission yeast Schizosaccharomyces pombe.</title>
        <authorList>
            <person name="Matsuyama A."/>
            <person name="Arai R."/>
            <person name="Yashiroda Y."/>
            <person name="Shirai A."/>
            <person name="Kamata A."/>
            <person name="Sekido S."/>
            <person name="Kobayashi Y."/>
            <person name="Hashimoto A."/>
            <person name="Hamamoto M."/>
            <person name="Hiraoka Y."/>
            <person name="Horinouchi S."/>
            <person name="Yoshida M."/>
        </authorList>
    </citation>
    <scope>SUBCELLULAR LOCATION [LARGE SCALE ANALYSIS]</scope>
</reference>
<reference key="5">
    <citation type="journal article" date="2018" name="Nat. Commun.">
        <title>LARP7 family proteins have conserved function in telomerase assembly.</title>
        <authorList>
            <person name="Collopy L.C."/>
            <person name="Ware T.L."/>
            <person name="Goncalves T."/>
            <person name="I Kongsstovu S."/>
            <person name="Yang Q."/>
            <person name="Amelina H."/>
            <person name="Pinder C."/>
            <person name="Alenazi A."/>
            <person name="Moiseeva V."/>
            <person name="Pearson S.R."/>
            <person name="Armstrong C.A."/>
            <person name="Tomita K."/>
        </authorList>
    </citation>
    <scope>FUNCTION</scope>
    <scope>DISRUPTION PHENOTYPE</scope>
    <scope>MUTAGENESIS OF TRP-103; 197-PHE-VAL-198 AND 341-ILE-ILE-342</scope>
</reference>
<reference key="6">
    <citation type="journal article" date="2018" name="Nat. Commun.">
        <title>LARP7-like protein Pof8 regulates telomerase assembly and poly(A)+TERRA expression in fission yeast.</title>
        <authorList>
            <person name="Mennie A.K."/>
            <person name="Moser B.A."/>
            <person name="Nakamura T.M."/>
        </authorList>
    </citation>
    <scope>FUNCTION</scope>
    <scope>IDENTIFICATION IN THE TELOMERASE HOLOENZYME COMPLEX</scope>
    <scope>SUBCELLULAR LOCATION</scope>
    <scope>DISRUPTION PHENOTYPE</scope>
    <scope>MUTAGENESIS OF TYR-330 AND ARG-343</scope>
</reference>
<reference key="7">
    <citation type="journal article" date="2018" name="Nat. Commun.">
        <title>Pof8 is a La-related protein and a constitutive component of telomerase in fission yeast.</title>
        <authorList>
            <person name="Paez-Moscoso D.J."/>
            <person name="Pan L."/>
            <person name="Sigauke R.F."/>
            <person name="Schroeder M.R."/>
            <person name="Tang W."/>
            <person name="Baumann P."/>
        </authorList>
    </citation>
    <scope>FUNCTION</scope>
    <scope>IDENTIFICATION IN THE TELOMERASE HOLOENZYME COMPLEX</scope>
    <scope>DISRUPTION PHENOTYPE</scope>
</reference>
<gene>
    <name evidence="8 9 11" type="primary">pof8</name>
    <name evidence="7" type="synonym">lar7</name>
    <name evidence="11" type="ORF">SPAC17G6.17</name>
</gene>
<evidence type="ECO:0000255" key="1">
    <source>
        <dbReference type="PROSITE-ProRule" id="PRU01288"/>
    </source>
</evidence>
<evidence type="ECO:0000269" key="2">
    <source>
    </source>
</evidence>
<evidence type="ECO:0000269" key="3">
    <source>
    </source>
</evidence>
<evidence type="ECO:0000269" key="4">
    <source>
    </source>
</evidence>
<evidence type="ECO:0000269" key="5">
    <source>
    </source>
</evidence>
<evidence type="ECO:0000269" key="6">
    <source>
    </source>
</evidence>
<evidence type="ECO:0000303" key="7">
    <source>
    </source>
</evidence>
<evidence type="ECO:0000303" key="8">
    <source>
    </source>
</evidence>
<evidence type="ECO:0000303" key="9">
    <source>
    </source>
</evidence>
<evidence type="ECO:0000305" key="10"/>
<evidence type="ECO:0000312" key="11">
    <source>
        <dbReference type="PomBase" id="SPAC17G6.17"/>
    </source>
</evidence>
<evidence type="ECO:0007829" key="12">
    <source>
        <dbReference type="PDB" id="6TZN"/>
    </source>
</evidence>
<organism>
    <name type="scientific">Schizosaccharomyces pombe (strain 972 / ATCC 24843)</name>
    <name type="common">Fission yeast</name>
    <dbReference type="NCBI Taxonomy" id="284812"/>
    <lineage>
        <taxon>Eukaryota</taxon>
        <taxon>Fungi</taxon>
        <taxon>Dikarya</taxon>
        <taxon>Ascomycota</taxon>
        <taxon>Taphrinomycotina</taxon>
        <taxon>Schizosaccharomycetes</taxon>
        <taxon>Schizosaccharomycetales</taxon>
        <taxon>Schizosaccharomycetaceae</taxon>
        <taxon>Schizosaccharomyces</taxon>
    </lineage>
</organism>
<accession>O13795</accession>
<sequence length="402" mass="46808">MFVPRQLNVRKIKAFTGKENNSIADGNNNKLKDEHYKHNEASKEPSHSISGGLMLNQQDRQLIEPLNPDFLSAVDSILEIYFHRERQKEKVHLAFLIQQDDFWKGIRPNPTQNNLKYALSYVTNALFHFDNSSHMVIRNENIVLPLDIPLYDRIIYVEPVPATLSNKSLLLAGKLRKYLKEFLPYVDAIGTPEGYAFVILYKKVDQSALSKLPVPPGWVLLTRKEWTNREEKYFENQLHLVKASSSDVSNSSNSFPENRYPKLTKVEKQMTKSVSKTSQTDKDEDNLDFTKNLLTRIKNLHPLTNKSTIHSLLSYVFSRQTQNIACEPMYIDYRKDETEAIIRWKTPLHAETCINAFRTQERKQNSHDDIRAHRKKGSSRPFLIAELITGEEEKNYWRMLKK</sequence>
<proteinExistence type="evidence at protein level"/>
<name>POF8_SCHPO</name>
<keyword id="KW-0002">3D-structure</keyword>
<keyword id="KW-0158">Chromosome</keyword>
<keyword id="KW-0963">Cytoplasm</keyword>
<keyword id="KW-0539">Nucleus</keyword>
<keyword id="KW-1185">Reference proteome</keyword>
<keyword id="KW-0694">RNA-binding</keyword>
<keyword id="KW-0779">Telomere</keyword>
<comment type="function">
    <text evidence="4 5 6">RNA-binding protein required for assembly of the holoenzyme telomerase ribonucleoprotein (RNP) complex (PubMed:29422501, PubMed:29422503, PubMed:29422664). Specifically binds telomerase RNA ter1 and promotes assembly of ter1 with catalytic subunit trt1 (PubMed:29422501, PubMed:29422503). Telomerase is a ribonucleoprotein enzyme essential that copies new telomeric repeats onto chromosome ends and functions to maintain cell division (PubMed:29422501, PubMed:29422503, PubMed:29422664).</text>
</comment>
<comment type="subunit">
    <text evidence="2 5 6">Component of the telomerase holoenzyme complex composed minimally of trt1 and the telomerase RNA template component (PubMed:29422503, PubMed:29422664). Interacts with skp1 (PubMed:15147268).</text>
</comment>
<comment type="subcellular location">
    <subcellularLocation>
        <location evidence="5">Chromosome</location>
        <location evidence="5">Telomere</location>
    </subcellularLocation>
    <subcellularLocation>
        <location evidence="3">Nucleus</location>
    </subcellularLocation>
    <subcellularLocation>
        <location evidence="3">Cytoplasm</location>
    </subcellularLocation>
</comment>
<comment type="disruption phenotype">
    <text evidence="4 5 6">Critically short telomeres caused by reduced ter1 RNA stability and telomerase holoenzyme complex assembly defects.</text>
</comment>
<comment type="similarity">
    <text evidence="10">Belongs to the LARP7 family.</text>
</comment>
<comment type="caution">
    <text evidence="2 10">Was initially thought to contain a F-box domain (PubMed:15147268). However, such a domain is not detectable by any prediction tool.</text>
</comment>
<protein>
    <recommendedName>
        <fullName evidence="7">La-related protein 7 homolog</fullName>
    </recommendedName>
</protein>